<accession>A1DA65</accession>
<feature type="chain" id="PRO_0000424126" description="Fumitremorgin C monooxygenase">
    <location>
        <begin position="1"/>
        <end position="504"/>
    </location>
</feature>
<feature type="transmembrane region" description="Helical" evidence="3">
    <location>
        <begin position="9"/>
        <end position="29"/>
    </location>
</feature>
<feature type="binding site" description="axial binding residue" evidence="1">
    <location>
        <position position="442"/>
    </location>
    <ligand>
        <name>heme</name>
        <dbReference type="ChEBI" id="CHEBI:30413"/>
    </ligand>
    <ligandPart>
        <name>Fe</name>
        <dbReference type="ChEBI" id="CHEBI:18248"/>
    </ligandPart>
</feature>
<proteinExistence type="inferred from homology"/>
<dbReference type="EC" id="1.14.14.119" evidence="2"/>
<dbReference type="EMBL" id="DS027694">
    <property type="protein sequence ID" value="EAW19755.1"/>
    <property type="molecule type" value="Genomic_DNA"/>
</dbReference>
<dbReference type="RefSeq" id="XP_001261652.1">
    <property type="nucleotide sequence ID" value="XM_001261651.1"/>
</dbReference>
<dbReference type="SMR" id="A1DA65"/>
<dbReference type="STRING" id="331117.A1DA65"/>
<dbReference type="EnsemblFungi" id="EAW19755">
    <property type="protein sequence ID" value="EAW19755"/>
    <property type="gene ID" value="NFIA_093750"/>
</dbReference>
<dbReference type="GeneID" id="4588685"/>
<dbReference type="KEGG" id="nfi:NFIA_093750"/>
<dbReference type="VEuPathDB" id="FungiDB:NFIA_093750"/>
<dbReference type="eggNOG" id="KOG0156">
    <property type="taxonomic scope" value="Eukaryota"/>
</dbReference>
<dbReference type="HOGENOM" id="CLU_022195_0_3_1"/>
<dbReference type="OMA" id="RICEHPE"/>
<dbReference type="OrthoDB" id="1844152at2759"/>
<dbReference type="Proteomes" id="UP000006702">
    <property type="component" value="Unassembled WGS sequence"/>
</dbReference>
<dbReference type="GO" id="GO:0016020">
    <property type="term" value="C:membrane"/>
    <property type="evidence" value="ECO:0007669"/>
    <property type="project" value="UniProtKB-SubCell"/>
</dbReference>
<dbReference type="GO" id="GO:0020037">
    <property type="term" value="F:heme binding"/>
    <property type="evidence" value="ECO:0007669"/>
    <property type="project" value="InterPro"/>
</dbReference>
<dbReference type="GO" id="GO:0005506">
    <property type="term" value="F:iron ion binding"/>
    <property type="evidence" value="ECO:0007669"/>
    <property type="project" value="InterPro"/>
</dbReference>
<dbReference type="GO" id="GO:0004497">
    <property type="term" value="F:monooxygenase activity"/>
    <property type="evidence" value="ECO:0007669"/>
    <property type="project" value="UniProtKB-KW"/>
</dbReference>
<dbReference type="GO" id="GO:0016705">
    <property type="term" value="F:oxidoreductase activity, acting on paired donors, with incorporation or reduction of molecular oxygen"/>
    <property type="evidence" value="ECO:0007669"/>
    <property type="project" value="InterPro"/>
</dbReference>
<dbReference type="GO" id="GO:0009820">
    <property type="term" value="P:alkaloid metabolic process"/>
    <property type="evidence" value="ECO:0007669"/>
    <property type="project" value="UniProtKB-KW"/>
</dbReference>
<dbReference type="GO" id="GO:0009058">
    <property type="term" value="P:biosynthetic process"/>
    <property type="evidence" value="ECO:0007669"/>
    <property type="project" value="UniProtKB-ARBA"/>
</dbReference>
<dbReference type="GO" id="GO:0019748">
    <property type="term" value="P:secondary metabolic process"/>
    <property type="evidence" value="ECO:0007669"/>
    <property type="project" value="UniProtKB-ARBA"/>
</dbReference>
<dbReference type="CDD" id="cd11041">
    <property type="entry name" value="CYP503A1-like"/>
    <property type="match status" value="1"/>
</dbReference>
<dbReference type="Gene3D" id="1.10.630.10">
    <property type="entry name" value="Cytochrome P450"/>
    <property type="match status" value="1"/>
</dbReference>
<dbReference type="InterPro" id="IPR001128">
    <property type="entry name" value="Cyt_P450"/>
</dbReference>
<dbReference type="InterPro" id="IPR017972">
    <property type="entry name" value="Cyt_P450_CS"/>
</dbReference>
<dbReference type="InterPro" id="IPR002403">
    <property type="entry name" value="Cyt_P450_E_grp-IV"/>
</dbReference>
<dbReference type="InterPro" id="IPR036396">
    <property type="entry name" value="Cyt_P450_sf"/>
</dbReference>
<dbReference type="PANTHER" id="PTHR46206">
    <property type="entry name" value="CYTOCHROME P450"/>
    <property type="match status" value="1"/>
</dbReference>
<dbReference type="PANTHER" id="PTHR46206:SF3">
    <property type="entry name" value="P450, PUTATIVE (EUROFUNG)-RELATED"/>
    <property type="match status" value="1"/>
</dbReference>
<dbReference type="Pfam" id="PF00067">
    <property type="entry name" value="p450"/>
    <property type="match status" value="1"/>
</dbReference>
<dbReference type="PRINTS" id="PR00465">
    <property type="entry name" value="EP450IV"/>
</dbReference>
<dbReference type="PRINTS" id="PR00385">
    <property type="entry name" value="P450"/>
</dbReference>
<dbReference type="SUPFAM" id="SSF48264">
    <property type="entry name" value="Cytochrome P450"/>
    <property type="match status" value="1"/>
</dbReference>
<dbReference type="PROSITE" id="PS00086">
    <property type="entry name" value="CYTOCHROME_P450"/>
    <property type="match status" value="1"/>
</dbReference>
<comment type="function">
    <text evidence="2 4">Cytochrome P450 monooxygenase; part of the gene cluster that mediates the biosynthesis of fumitremorgins, indole alkaloids that carry not only intriguing chemical structures, but also interesting biological and pharmacological activities (PubMed:23109474). The biosynthesis of fumitremorgin-type alkaloids begins by condensation of the two amino acids L-tryptophan and L-proline to brevianamide F, catalyzed by the non-ribosomal peptide synthetase ftmPS/ftmA (By similarity). Brevianamide F is then prenylated by the prenyltransferase ftmPT1/ftmB in the presence of dimethylallyl diphosphate, resulting in the formation of tryprostatin B (By similarity). The three cytochrome P450 monooxygenases, ftmP450-1/ftmC, ftmP450-2/ftmE and ftmP450-3/FtmG, are responsible for the conversion of tryprostatin B to 6-hydroxytryprostatin B, tryprostatin A to fumitremorgin C and fumitremorgin C to 12,13-dihydroxyfumitremorgin C, respectively (By similarity). The putative methyltransferase ftmMT/ftmD is expected for the conversion of 6-hydroxytryprostatin B to tryprostatin A (By similarity). FtmPT2/FtmH catalyzes the prenylation of 12,13-dihydroxyfumitre-morgin C in the presence of dimethylallyl diphosphate, resulting in the formation of fumitremorgin B (By similarity). Fumitremorgin B is further converted to verruculogen by ftmOx1/ftmF via the insertion of an endoperoxide bond between the two prenyl moieties (By similarity). Finally, verruculogen is further converted to fumitremorgin A by the verruculogen prenyltransferase ftmPT3 (PubMed:23109474).</text>
</comment>
<comment type="catalytic activity">
    <reaction evidence="2">
        <text>fumitremorgin C + 2 reduced [NADPH--hemoprotein reductase] + 2 O2 = 12alpha,13alpha-dihydroxyfumitremorgin C + 2 oxidized [NADPH--hemoprotein reductase] + 2 H2O + 2 H(+)</text>
        <dbReference type="Rhea" id="RHEA:35967"/>
        <dbReference type="Rhea" id="RHEA-COMP:11964"/>
        <dbReference type="Rhea" id="RHEA-COMP:11965"/>
        <dbReference type="ChEBI" id="CHEBI:15377"/>
        <dbReference type="ChEBI" id="CHEBI:15378"/>
        <dbReference type="ChEBI" id="CHEBI:15379"/>
        <dbReference type="ChEBI" id="CHEBI:57618"/>
        <dbReference type="ChEBI" id="CHEBI:58210"/>
        <dbReference type="ChEBI" id="CHEBI:72763"/>
        <dbReference type="ChEBI" id="CHEBI:72764"/>
        <dbReference type="EC" id="1.14.14.119"/>
    </reaction>
</comment>
<comment type="cofactor">
    <cofactor evidence="1">
        <name>heme</name>
        <dbReference type="ChEBI" id="CHEBI:30413"/>
    </cofactor>
</comment>
<comment type="pathway">
    <text evidence="2">Mycotoxin biosynthesis.</text>
</comment>
<comment type="subcellular location">
    <subcellularLocation>
        <location evidence="3">Membrane</location>
        <topology evidence="3">Single-pass membrane protein</topology>
    </subcellularLocation>
</comment>
<comment type="similarity">
    <text evidence="6">Belongs to the cytochrome P450 family.</text>
</comment>
<reference key="1">
    <citation type="journal article" date="2008" name="PLoS Genet.">
        <title>Genomic islands in the pathogenic filamentous fungus Aspergillus fumigatus.</title>
        <authorList>
            <person name="Fedorova N.D."/>
            <person name="Khaldi N."/>
            <person name="Joardar V.S."/>
            <person name="Maiti R."/>
            <person name="Amedeo P."/>
            <person name="Anderson M.J."/>
            <person name="Crabtree J."/>
            <person name="Silva J.C."/>
            <person name="Badger J.H."/>
            <person name="Albarraq A."/>
            <person name="Angiuoli S."/>
            <person name="Bussey H."/>
            <person name="Bowyer P."/>
            <person name="Cotty P.J."/>
            <person name="Dyer P.S."/>
            <person name="Egan A."/>
            <person name="Galens K."/>
            <person name="Fraser-Liggett C.M."/>
            <person name="Haas B.J."/>
            <person name="Inman J.M."/>
            <person name="Kent R."/>
            <person name="Lemieux S."/>
            <person name="Malavazi I."/>
            <person name="Orvis J."/>
            <person name="Roemer T."/>
            <person name="Ronning C.M."/>
            <person name="Sundaram J.P."/>
            <person name="Sutton G."/>
            <person name="Turner G."/>
            <person name="Venter J.C."/>
            <person name="White O.R."/>
            <person name="Whitty B.R."/>
            <person name="Youngman P."/>
            <person name="Wolfe K.H."/>
            <person name="Goldman G.H."/>
            <person name="Wortman J.R."/>
            <person name="Jiang B."/>
            <person name="Denning D.W."/>
            <person name="Nierman W.C."/>
        </authorList>
    </citation>
    <scope>NUCLEOTIDE SEQUENCE [LARGE SCALE GENOMIC DNA]</scope>
    <source>
        <strain>ATCC 1020 / DSM 3700 / CBS 544.65 / FGSC A1164 / JCM 1740 / NRRL 181 / WB 181</strain>
    </source>
</reference>
<reference key="2">
    <citation type="journal article" date="2012" name="ChemBioChem">
        <title>Identification of the verruculogen prenyltransferase FtmPT3 by a combination of chemical, bioinformatic and biochemical approaches.</title>
        <authorList>
            <person name="Mundt K."/>
            <person name="Wollinsky B."/>
            <person name="Ruan H.L."/>
            <person name="Zhu T."/>
            <person name="Li S.M."/>
        </authorList>
    </citation>
    <scope>FUNCTION</scope>
</reference>
<protein>
    <recommendedName>
        <fullName evidence="5">Fumitremorgin C monooxygenase</fullName>
        <ecNumber evidence="2">1.14.14.119</ecNumber>
    </recommendedName>
    <alternativeName>
        <fullName evidence="2">Fumitremorgin biosynthesis protein G</fullName>
    </alternativeName>
</protein>
<sequence length="504" mass="57231">METFDAIQLPYPGVVGASLLVILGIILLFPLDTGHFISINQHPWDFFQTKAKQEFEYNAAALLNEGLQTGRSAFRLVTNMVTYLILKDQYAEEIKNDSRFGAHEAVDPVLLVDLPGLETMFQGSLHNQVPPMAVRALNKELVHLTPFLSEEAMNCLQTRWTDSAEWHDVSIPETVLALIAQMTTRALLGPALCRNPEWLDIAKSFTTNRAIAVAAVQSWPSFLQPVIHWFLSPCRALRRQIQCARNILLPVLERERRSYRSDQPTKREFSNLAFIDQYAKGARYDATMAQLRIIAVAFQTTSDLVEKVIARLCKHPELIQPLREEVVSVVGKNGLHSHSLRKLTLMESVMKETQRLEPAVIIGMFRLAKEKVTLKDGTVIPKGTNIAFANDLRFDPEMYPEPETFDGYRFQRMREDPEKIDLTPFTKTRMSHLAFGHGKHACPGRFLACDEAKLILCHILLKYEIRAVEGSPPELRARGMFVQLDPGAMMSVRRRRENEFALHG</sequence>
<evidence type="ECO:0000250" key="1">
    <source>
        <dbReference type="UniProtKB" id="P04798"/>
    </source>
</evidence>
<evidence type="ECO:0000250" key="2">
    <source>
        <dbReference type="UniProtKB" id="Q4WAX0"/>
    </source>
</evidence>
<evidence type="ECO:0000255" key="3"/>
<evidence type="ECO:0000269" key="4">
    <source>
    </source>
</evidence>
<evidence type="ECO:0000303" key="5">
    <source>
    </source>
</evidence>
<evidence type="ECO:0000305" key="6"/>
<organism>
    <name type="scientific">Neosartorya fischeri (strain ATCC 1020 / DSM 3700 / CBS 544.65 / FGSC A1164 / JCM 1740 / NRRL 181 / WB 181)</name>
    <name type="common">Aspergillus fischerianus</name>
    <dbReference type="NCBI Taxonomy" id="331117"/>
    <lineage>
        <taxon>Eukaryota</taxon>
        <taxon>Fungi</taxon>
        <taxon>Dikarya</taxon>
        <taxon>Ascomycota</taxon>
        <taxon>Pezizomycotina</taxon>
        <taxon>Eurotiomycetes</taxon>
        <taxon>Eurotiomycetidae</taxon>
        <taxon>Eurotiales</taxon>
        <taxon>Aspergillaceae</taxon>
        <taxon>Aspergillus</taxon>
        <taxon>Aspergillus subgen. Fumigati</taxon>
    </lineage>
</organism>
<name>FTMG_NEOFI</name>
<gene>
    <name evidence="5" type="primary">ftmP450-3</name>
    <name evidence="2" type="synonym">ftmG</name>
    <name type="ORF">NFIA_093750</name>
</gene>
<keyword id="KW-0017">Alkaloid metabolism</keyword>
<keyword id="KW-0349">Heme</keyword>
<keyword id="KW-0408">Iron</keyword>
<keyword id="KW-0472">Membrane</keyword>
<keyword id="KW-0479">Metal-binding</keyword>
<keyword id="KW-0503">Monooxygenase</keyword>
<keyword id="KW-0560">Oxidoreductase</keyword>
<keyword id="KW-1185">Reference proteome</keyword>
<keyword id="KW-0812">Transmembrane</keyword>
<keyword id="KW-1133">Transmembrane helix</keyword>
<keyword id="KW-0843">Virulence</keyword>